<protein>
    <recommendedName>
        <fullName evidence="1">Pyrokinin-5</fullName>
    </recommendedName>
    <alternativeName>
        <fullName evidence="1">FXPRL-amide</fullName>
    </alternativeName>
    <alternativeName>
        <fullName evidence="4">PerFu-Capa-PK</fullName>
    </alternativeName>
</protein>
<organism>
    <name type="scientific">Periplaneta fuliginosa</name>
    <name type="common">Smokybrown cockroach</name>
    <name type="synonym">Dusky-brown cockroach</name>
    <dbReference type="NCBI Taxonomy" id="36977"/>
    <lineage>
        <taxon>Eukaryota</taxon>
        <taxon>Metazoa</taxon>
        <taxon>Ecdysozoa</taxon>
        <taxon>Arthropoda</taxon>
        <taxon>Hexapoda</taxon>
        <taxon>Insecta</taxon>
        <taxon>Pterygota</taxon>
        <taxon>Neoptera</taxon>
        <taxon>Polyneoptera</taxon>
        <taxon>Dictyoptera</taxon>
        <taxon>Blattodea</taxon>
        <taxon>Blattoidea</taxon>
        <taxon>Blattidae</taxon>
        <taxon>Blattinae</taxon>
        <taxon>Periplaneta</taxon>
    </lineage>
</organism>
<accession>P85714</accession>
<reference evidence="5" key="1">
    <citation type="journal article" date="2009" name="BMC Evol. Biol.">
        <title>A proteomic approach for studying insect phylogeny: CAPA peptides of ancient insect taxa (Dictyoptera, Blattoptera) as a test case.</title>
        <authorList>
            <person name="Roth S."/>
            <person name="Fromm B."/>
            <person name="Gaede G."/>
            <person name="Predel R."/>
        </authorList>
    </citation>
    <scope>PROTEIN SEQUENCE</scope>
    <scope>AMIDATION AT LEU-17</scope>
    <source>
        <tissue evidence="3">Abdominal perisympathetic organs</tissue>
    </source>
</reference>
<name>PPK5_PERFU</name>
<comment type="function">
    <text evidence="1">Myoactive.</text>
</comment>
<comment type="subcellular location">
    <subcellularLocation>
        <location evidence="5">Secreted</location>
    </subcellularLocation>
</comment>
<comment type="similarity">
    <text evidence="2">Belongs to the pyrokinin family.</text>
</comment>
<dbReference type="GO" id="GO:0005576">
    <property type="term" value="C:extracellular region"/>
    <property type="evidence" value="ECO:0007669"/>
    <property type="project" value="UniProtKB-SubCell"/>
</dbReference>
<dbReference type="GO" id="GO:0005184">
    <property type="term" value="F:neuropeptide hormone activity"/>
    <property type="evidence" value="ECO:0007669"/>
    <property type="project" value="InterPro"/>
</dbReference>
<dbReference type="GO" id="GO:0007218">
    <property type="term" value="P:neuropeptide signaling pathway"/>
    <property type="evidence" value="ECO:0007669"/>
    <property type="project" value="UniProtKB-KW"/>
</dbReference>
<dbReference type="InterPro" id="IPR001484">
    <property type="entry name" value="Pyrokinin_CS"/>
</dbReference>
<dbReference type="PROSITE" id="PS00539">
    <property type="entry name" value="PYROKININ"/>
    <property type="match status" value="1"/>
</dbReference>
<keyword id="KW-0027">Amidation</keyword>
<keyword id="KW-0903">Direct protein sequencing</keyword>
<keyword id="KW-0527">Neuropeptide</keyword>
<keyword id="KW-0964">Secreted</keyword>
<feature type="peptide" id="PRO_0000378712" description="Pyrokinin-5" evidence="3">
    <location>
        <begin position="1"/>
        <end position="17"/>
    </location>
</feature>
<feature type="modified residue" description="Leucine amide" evidence="3">
    <location>
        <position position="17"/>
    </location>
</feature>
<evidence type="ECO:0000250" key="1">
    <source>
        <dbReference type="UniProtKB" id="P82617"/>
    </source>
</evidence>
<evidence type="ECO:0000255" key="2"/>
<evidence type="ECO:0000269" key="3">
    <source>
    </source>
</evidence>
<evidence type="ECO:0000303" key="4">
    <source>
    </source>
</evidence>
<evidence type="ECO:0000305" key="5"/>
<sequence length="17" mass="1653">GGGGSGETSGMWFGPRL</sequence>
<proteinExistence type="evidence at protein level"/>